<feature type="chain" id="PRO_1000143694" description="UPF0367 protein MAE_19160">
    <location>
        <begin position="1"/>
        <end position="89"/>
    </location>
</feature>
<protein>
    <recommendedName>
        <fullName evidence="1">UPF0367 protein MAE_19160</fullName>
    </recommendedName>
</protein>
<reference key="1">
    <citation type="journal article" date="2007" name="DNA Res.">
        <title>Complete genomic structure of the bloom-forming toxic cyanobacterium Microcystis aeruginosa NIES-843.</title>
        <authorList>
            <person name="Kaneko T."/>
            <person name="Nakajima N."/>
            <person name="Okamoto S."/>
            <person name="Suzuki I."/>
            <person name="Tanabe Y."/>
            <person name="Tamaoki M."/>
            <person name="Nakamura Y."/>
            <person name="Kasai F."/>
            <person name="Watanabe A."/>
            <person name="Kawashima K."/>
            <person name="Kishida Y."/>
            <person name="Ono A."/>
            <person name="Shimizu Y."/>
            <person name="Takahashi C."/>
            <person name="Minami C."/>
            <person name="Fujishiro T."/>
            <person name="Kohara M."/>
            <person name="Katoh M."/>
            <person name="Nakazaki N."/>
            <person name="Nakayama S."/>
            <person name="Yamada M."/>
            <person name="Tabata S."/>
            <person name="Watanabe M.M."/>
        </authorList>
    </citation>
    <scope>NUCLEOTIDE SEQUENCE [LARGE SCALE GENOMIC DNA]</scope>
    <source>
        <strain>NIES-843 / IAM M-247</strain>
    </source>
</reference>
<dbReference type="EMBL" id="AP009552">
    <property type="protein sequence ID" value="BAG01738.1"/>
    <property type="molecule type" value="Genomic_DNA"/>
</dbReference>
<dbReference type="RefSeq" id="WP_002756830.1">
    <property type="nucleotide sequence ID" value="NC_010296.1"/>
</dbReference>
<dbReference type="STRING" id="449447.MAE_19160"/>
<dbReference type="PaxDb" id="449447-MAE_19160"/>
<dbReference type="EnsemblBacteria" id="BAG01738">
    <property type="protein sequence ID" value="BAG01738"/>
    <property type="gene ID" value="MAE_19160"/>
</dbReference>
<dbReference type="KEGG" id="mar:MAE_19160"/>
<dbReference type="eggNOG" id="ENOG5032YB3">
    <property type="taxonomic scope" value="Bacteria"/>
</dbReference>
<dbReference type="HOGENOM" id="CLU_180777_0_0_3"/>
<dbReference type="BioCyc" id="MAER449447:MAE_RS08380-MONOMER"/>
<dbReference type="Proteomes" id="UP000001510">
    <property type="component" value="Chromosome"/>
</dbReference>
<dbReference type="HAMAP" id="MF_01360">
    <property type="entry name" value="UPF0367"/>
    <property type="match status" value="1"/>
</dbReference>
<dbReference type="InterPro" id="IPR020885">
    <property type="entry name" value="UPF0367"/>
</dbReference>
<dbReference type="NCBIfam" id="NF010236">
    <property type="entry name" value="PRK13683.1"/>
    <property type="match status" value="1"/>
</dbReference>
<name>Y1916_MICAN</name>
<gene>
    <name type="ordered locus">MAE_19160</name>
</gene>
<comment type="similarity">
    <text evidence="1">Belongs to the UPF0367 family.</text>
</comment>
<sequence length="89" mass="9504">MYSIDITLKLSPIPISVQRKEEAAADALYQTIINAMRSPNPELLELTCEKQTDKKVAVLSDQISAVIVSQKSGAASTGRAPGFVALATE</sequence>
<evidence type="ECO:0000255" key="1">
    <source>
        <dbReference type="HAMAP-Rule" id="MF_01360"/>
    </source>
</evidence>
<organism>
    <name type="scientific">Microcystis aeruginosa (strain NIES-843 / IAM M-2473)</name>
    <dbReference type="NCBI Taxonomy" id="449447"/>
    <lineage>
        <taxon>Bacteria</taxon>
        <taxon>Bacillati</taxon>
        <taxon>Cyanobacteriota</taxon>
        <taxon>Cyanophyceae</taxon>
        <taxon>Oscillatoriophycideae</taxon>
        <taxon>Chroococcales</taxon>
        <taxon>Microcystaceae</taxon>
        <taxon>Microcystis</taxon>
    </lineage>
</organism>
<proteinExistence type="inferred from homology"/>
<accession>B0JWQ8</accession>